<protein>
    <recommendedName>
        <fullName>Vacuolar protein sorting-associated protein 53 homolog</fullName>
    </recommendedName>
</protein>
<sequence length="832" mass="94405">MMEEEELEFVEELEAVLQLTPEVQLAIEQVFPSQDPLDRADFNAVEYINTLFPTEQSLANIDEVVNKIRLKIRRLDDNIRTVVRGQTNVGQDGRQALEEAQKAIQQLFGKIKDIKDKAEKSEQMVKEITRDIKQLDHAKRHLTTSITTLNHLHMLAGGVDSLEAMTRRRQYGEVANLLQGVMNVLEHFHKYMGIPQIRQLSERVKAAQTELGQQILADFEEAFPSQGTKRPGGPSNVLRDACLVANILDPRIKQEIIKKFIKQHLSEYLVLFQENQDVAWLDKIDRRYAWIKRQLVDYEEKYGRMFPREWCMAERIAVEFCHVTRAELAKIMRTRAKEIEVKLLLFAIQRTTNFEGFLAKRFSGCTLTDGTLKKLESPPPSTNPFLEDEPTPEMEELATEKGDLDQPKKPKAPDNPFHGIVSKCFEPHLYVYIESQDKNLGELIDRFVADFKAQGPPKPNTDEGGAVLPSCADLFVYYKKCMVQCSQLSTGEPMIALTTIFQKYLREYAWKILSGNLPKTTTSSGGLTISSLLKEKEGSEVAKFTLEELCLICNILSTAEYCLATTQQLEEKLKEKVDVSLIERINLTGEMDTFSTVISSSIQLLVQDLDAACDPALTAMSKMQWQNVEHVGDQSPYVTSVILHIKQNVPIIRDNLASTRKYFTQFCVKFANSFIPKFITHLFKCKPISMVGAEQLLLDTHSLKMVLLDLPSISSQVVRKAPASYTKIVVKGMTRAEMILKVVMAPHEPLVVFVDNYIKLLTDCNTETFQKILDMKGLKRSEQSSMLELLRQRLPAPPSGAESSGSLSLTAPTPEQESSRIRKLEKLIKKRL</sequence>
<proteinExistence type="evidence at protein level"/>
<dbReference type="EMBL" id="AY444797">
    <property type="protein sequence ID" value="AAS20944.1"/>
    <property type="molecule type" value="mRNA"/>
</dbReference>
<dbReference type="EMBL" id="AF246287">
    <property type="protein sequence ID" value="AAK27973.1"/>
    <property type="molecule type" value="mRNA"/>
</dbReference>
<dbReference type="EMBL" id="EU021218">
    <property type="protein sequence ID" value="ABW03005.1"/>
    <property type="molecule type" value="mRNA"/>
</dbReference>
<dbReference type="EMBL" id="AK001841">
    <property type="protein sequence ID" value="BAA91935.1"/>
    <property type="status" value="ALT_INIT"/>
    <property type="molecule type" value="mRNA"/>
</dbReference>
<dbReference type="EMBL" id="AK290343">
    <property type="protein sequence ID" value="BAF83032.1"/>
    <property type="molecule type" value="mRNA"/>
</dbReference>
<dbReference type="EMBL" id="AC015853">
    <property type="status" value="NOT_ANNOTATED_CDS"/>
    <property type="molecule type" value="Genomic_DNA"/>
</dbReference>
<dbReference type="EMBL" id="AC027455">
    <property type="status" value="NOT_ANNOTATED_CDS"/>
    <property type="molecule type" value="Genomic_DNA"/>
</dbReference>
<dbReference type="EMBL" id="CH471108">
    <property type="protein sequence ID" value="EAW90661.1"/>
    <property type="molecule type" value="Genomic_DNA"/>
</dbReference>
<dbReference type="EMBL" id="BC006116">
    <property type="protein sequence ID" value="AAH06116.1"/>
    <property type="molecule type" value="mRNA"/>
</dbReference>
<dbReference type="EMBL" id="AF318335">
    <property type="protein sequence ID" value="AAL55842.1"/>
    <property type="status" value="ALT_SEQ"/>
    <property type="molecule type" value="mRNA"/>
</dbReference>
<dbReference type="CCDS" id="CCDS10995.1">
    <molecule id="Q5VIR6-2"/>
</dbReference>
<dbReference type="CCDS" id="CCDS45558.1">
    <molecule id="Q5VIR6-4"/>
</dbReference>
<dbReference type="CCDS" id="CCDS92214.1">
    <molecule id="Q5VIR6-1"/>
</dbReference>
<dbReference type="RefSeq" id="NP_001121631.1">
    <molecule id="Q5VIR6-4"/>
    <property type="nucleotide sequence ID" value="NM_001128159.3"/>
</dbReference>
<dbReference type="RefSeq" id="NP_001353182.1">
    <molecule id="Q5VIR6-1"/>
    <property type="nucleotide sequence ID" value="NM_001366253.2"/>
</dbReference>
<dbReference type="RefSeq" id="NP_060759.2">
    <molecule id="Q5VIR6-2"/>
    <property type="nucleotide sequence ID" value="NM_018289.3"/>
</dbReference>
<dbReference type="RefSeq" id="XP_047292300.1">
    <molecule id="Q5VIR6-4"/>
    <property type="nucleotide sequence ID" value="XM_047436344.1"/>
</dbReference>
<dbReference type="RefSeq" id="XP_054172580.1">
    <molecule id="Q5VIR6-4"/>
    <property type="nucleotide sequence ID" value="XM_054316605.1"/>
</dbReference>
<dbReference type="RefSeq" id="XP_054188055.1">
    <molecule id="Q5VIR6-4"/>
    <property type="nucleotide sequence ID" value="XM_054332080.1"/>
</dbReference>
<dbReference type="SMR" id="Q5VIR6"/>
<dbReference type="BioGRID" id="120563">
    <property type="interactions" value="144"/>
</dbReference>
<dbReference type="ComplexPortal" id="CPX-6207">
    <property type="entry name" value="EARP tethering complex"/>
</dbReference>
<dbReference type="ComplexPortal" id="CPX-6208">
    <property type="entry name" value="GARP tethering complex"/>
</dbReference>
<dbReference type="CORUM" id="Q5VIR6"/>
<dbReference type="DIP" id="DIP-59352N"/>
<dbReference type="FunCoup" id="Q5VIR6">
    <property type="interactions" value="3293"/>
</dbReference>
<dbReference type="IntAct" id="Q5VIR6">
    <property type="interactions" value="38"/>
</dbReference>
<dbReference type="MINT" id="Q5VIR6"/>
<dbReference type="STRING" id="9606.ENSP00000401435"/>
<dbReference type="GlyGen" id="Q5VIR6">
    <property type="glycosylation" value="1 site"/>
</dbReference>
<dbReference type="iPTMnet" id="Q5VIR6"/>
<dbReference type="PhosphoSitePlus" id="Q5VIR6"/>
<dbReference type="BioMuta" id="VPS53"/>
<dbReference type="DMDM" id="74746777"/>
<dbReference type="jPOST" id="Q5VIR6"/>
<dbReference type="MassIVE" id="Q5VIR6"/>
<dbReference type="PaxDb" id="9606-ENSP00000401435"/>
<dbReference type="PeptideAtlas" id="Q5VIR6"/>
<dbReference type="ProteomicsDB" id="65251">
    <molecule id="Q5VIR6-1"/>
</dbReference>
<dbReference type="ProteomicsDB" id="65252">
    <molecule id="Q5VIR6-2"/>
</dbReference>
<dbReference type="ProteomicsDB" id="65253">
    <molecule id="Q5VIR6-3"/>
</dbReference>
<dbReference type="ProteomicsDB" id="65254">
    <molecule id="Q5VIR6-4"/>
</dbReference>
<dbReference type="Pumba" id="Q5VIR6"/>
<dbReference type="Antibodypedia" id="10256">
    <property type="antibodies" value="133 antibodies from 27 providers"/>
</dbReference>
<dbReference type="DNASU" id="55275"/>
<dbReference type="Ensembl" id="ENST00000291074.10">
    <molecule id="Q5VIR6-2"/>
    <property type="protein sequence ID" value="ENSP00000291074.5"/>
    <property type="gene ID" value="ENSG00000141252.21"/>
</dbReference>
<dbReference type="Ensembl" id="ENST00000437048.7">
    <molecule id="Q5VIR6-4"/>
    <property type="protein sequence ID" value="ENSP00000401435.2"/>
    <property type="gene ID" value="ENSG00000141252.21"/>
</dbReference>
<dbReference type="Ensembl" id="ENST00000571805.6">
    <molecule id="Q5VIR6-1"/>
    <property type="protein sequence ID" value="ENSP00000459312.1"/>
    <property type="gene ID" value="ENSG00000141252.21"/>
</dbReference>
<dbReference type="Ensembl" id="ENST00000638350.1">
    <molecule id="Q5VIR6-2"/>
    <property type="protein sequence ID" value="ENSP00000492070.1"/>
    <property type="gene ID" value="ENSG00000283883.2"/>
</dbReference>
<dbReference type="Ensembl" id="ENST00000639801.2">
    <molecule id="Q5VIR6-4"/>
    <property type="protein sequence ID" value="ENSP00000492761.1"/>
    <property type="gene ID" value="ENSG00000283883.2"/>
</dbReference>
<dbReference type="Ensembl" id="ENST00000639896.1">
    <molecule id="Q5VIR6-1"/>
    <property type="protein sequence ID" value="ENSP00000492119.1"/>
    <property type="gene ID" value="ENSG00000283883.2"/>
</dbReference>
<dbReference type="Ensembl" id="ENST00000680069.1">
    <molecule id="Q5VIR6-3"/>
    <property type="protein sequence ID" value="ENSP00000505145.1"/>
    <property type="gene ID" value="ENSG00000141252.21"/>
</dbReference>
<dbReference type="Ensembl" id="ENST00000680465.1">
    <molecule id="Q5VIR6-4"/>
    <property type="protein sequence ID" value="ENSP00000505997.1"/>
    <property type="gene ID" value="ENSG00000141252.21"/>
</dbReference>
<dbReference type="GeneID" id="55275"/>
<dbReference type="KEGG" id="hsa:55275"/>
<dbReference type="MANE-Select" id="ENST00000437048.7">
    <property type="protein sequence ID" value="ENSP00000401435.2"/>
    <property type="RefSeq nucleotide sequence ID" value="NM_001128159.3"/>
    <property type="RefSeq protein sequence ID" value="NP_001121631.1"/>
</dbReference>
<dbReference type="UCSC" id="uc002frm.3">
    <molecule id="Q5VIR6-4"/>
    <property type="organism name" value="human"/>
</dbReference>
<dbReference type="AGR" id="HGNC:25608"/>
<dbReference type="CTD" id="55275"/>
<dbReference type="DisGeNET" id="55275"/>
<dbReference type="GeneCards" id="VPS53"/>
<dbReference type="HGNC" id="HGNC:25608">
    <property type="gene designation" value="VPS53"/>
</dbReference>
<dbReference type="HPA" id="ENSG00000141252">
    <property type="expression patterns" value="Low tissue specificity"/>
</dbReference>
<dbReference type="MalaCards" id="VPS53"/>
<dbReference type="MIM" id="615850">
    <property type="type" value="gene"/>
</dbReference>
<dbReference type="MIM" id="615851">
    <property type="type" value="phenotype"/>
</dbReference>
<dbReference type="neXtProt" id="NX_Q5VIR6"/>
<dbReference type="OpenTargets" id="ENSG00000141252"/>
<dbReference type="Orphanet" id="247198">
    <property type="disease" value="Progressive cerebello-cerebral atrophy"/>
</dbReference>
<dbReference type="PharmGKB" id="PA142670618"/>
<dbReference type="VEuPathDB" id="HostDB:ENSG00000141252"/>
<dbReference type="eggNOG" id="KOG2180">
    <property type="taxonomic scope" value="Eukaryota"/>
</dbReference>
<dbReference type="GeneTree" id="ENSGT00390000015165"/>
<dbReference type="HOGENOM" id="CLU_007339_0_0_1"/>
<dbReference type="InParanoid" id="Q5VIR6"/>
<dbReference type="OMA" id="YKFAEAK"/>
<dbReference type="OrthoDB" id="10261632at2759"/>
<dbReference type="PAN-GO" id="Q5VIR6">
    <property type="GO annotations" value="2 GO annotations based on evolutionary models"/>
</dbReference>
<dbReference type="PhylomeDB" id="Q5VIR6"/>
<dbReference type="TreeFam" id="TF106150"/>
<dbReference type="PathwayCommons" id="Q5VIR6"/>
<dbReference type="Reactome" id="R-HSA-6811440">
    <property type="pathway name" value="Retrograde transport at the Trans-Golgi-Network"/>
</dbReference>
<dbReference type="SignaLink" id="Q5VIR6"/>
<dbReference type="BioGRID-ORCS" id="55275">
    <property type="hits" value="139 hits in 1166 CRISPR screens"/>
</dbReference>
<dbReference type="CD-CODE" id="FB4E32DD">
    <property type="entry name" value="Presynaptic clusters and postsynaptic densities"/>
</dbReference>
<dbReference type="ChiTaRS" id="VPS53">
    <property type="organism name" value="human"/>
</dbReference>
<dbReference type="GenomeRNAi" id="55275"/>
<dbReference type="Pharos" id="Q5VIR6">
    <property type="development level" value="Tbio"/>
</dbReference>
<dbReference type="PRO" id="PR:Q5VIR6"/>
<dbReference type="Proteomes" id="UP000005640">
    <property type="component" value="Chromosome 17"/>
</dbReference>
<dbReference type="RNAct" id="Q5VIR6">
    <property type="molecule type" value="protein"/>
</dbReference>
<dbReference type="Bgee" id="ENSG00000141252">
    <property type="expression patterns" value="Expressed in sural nerve and 107 other cell types or tissues"/>
</dbReference>
<dbReference type="ExpressionAtlas" id="Q5VIR6">
    <property type="expression patterns" value="baseline and differential"/>
</dbReference>
<dbReference type="GO" id="GO:0005829">
    <property type="term" value="C:cytosol"/>
    <property type="evidence" value="ECO:0000314"/>
    <property type="project" value="HPA"/>
</dbReference>
<dbReference type="GO" id="GO:1990745">
    <property type="term" value="C:EARP complex"/>
    <property type="evidence" value="ECO:0000314"/>
    <property type="project" value="UniProtKB"/>
</dbReference>
<dbReference type="GO" id="GO:0010008">
    <property type="term" value="C:endosome membrane"/>
    <property type="evidence" value="ECO:0007669"/>
    <property type="project" value="UniProtKB-SubCell"/>
</dbReference>
<dbReference type="GO" id="GO:0000938">
    <property type="term" value="C:GARP complex"/>
    <property type="evidence" value="ECO:0000314"/>
    <property type="project" value="MGI"/>
</dbReference>
<dbReference type="GO" id="GO:0005794">
    <property type="term" value="C:Golgi apparatus"/>
    <property type="evidence" value="ECO:0000314"/>
    <property type="project" value="HPA"/>
</dbReference>
<dbReference type="GO" id="GO:0043231">
    <property type="term" value="C:intracellular membrane-bounded organelle"/>
    <property type="evidence" value="ECO:0000314"/>
    <property type="project" value="HPA"/>
</dbReference>
<dbReference type="GO" id="GO:0016020">
    <property type="term" value="C:membrane"/>
    <property type="evidence" value="ECO:0000314"/>
    <property type="project" value="MGI"/>
</dbReference>
<dbReference type="GO" id="GO:0048471">
    <property type="term" value="C:perinuclear region of cytoplasm"/>
    <property type="evidence" value="ECO:0000314"/>
    <property type="project" value="UniProtKB"/>
</dbReference>
<dbReference type="GO" id="GO:0055037">
    <property type="term" value="C:recycling endosome"/>
    <property type="evidence" value="ECO:0000314"/>
    <property type="project" value="UniProtKB"/>
</dbReference>
<dbReference type="GO" id="GO:0032588">
    <property type="term" value="C:trans-Golgi network membrane"/>
    <property type="evidence" value="ECO:0000304"/>
    <property type="project" value="Reactome"/>
</dbReference>
<dbReference type="GO" id="GO:0032456">
    <property type="term" value="P:endocytic recycling"/>
    <property type="evidence" value="ECO:0000315"/>
    <property type="project" value="UniProtKB"/>
</dbReference>
<dbReference type="GO" id="GO:0007041">
    <property type="term" value="P:lysosomal transport"/>
    <property type="evidence" value="ECO:0000315"/>
    <property type="project" value="MGI"/>
</dbReference>
<dbReference type="GO" id="GO:0006622">
    <property type="term" value="P:protein targeting to lysosome"/>
    <property type="evidence" value="ECO:0007669"/>
    <property type="project" value="Ensembl"/>
</dbReference>
<dbReference type="GO" id="GO:0042147">
    <property type="term" value="P:retrograde transport, endosome to Golgi"/>
    <property type="evidence" value="ECO:0000315"/>
    <property type="project" value="UniProtKB"/>
</dbReference>
<dbReference type="GO" id="GO:0090119">
    <property type="term" value="P:vesicle-mediated cholesterol transport"/>
    <property type="evidence" value="ECO:0007669"/>
    <property type="project" value="Ensembl"/>
</dbReference>
<dbReference type="FunFam" id="1.10.357.110:FF:000001">
    <property type="entry name" value="vacuolar protein sorting-associated protein 53 homolog"/>
    <property type="match status" value="1"/>
</dbReference>
<dbReference type="Gene3D" id="1.10.287.950">
    <property type="entry name" value="Methyl-accepting chemotaxis protein"/>
    <property type="match status" value="1"/>
</dbReference>
<dbReference type="Gene3D" id="1.10.357.110">
    <property type="entry name" value="Vacuolar protein sorting-associated protein 53, C-terminus"/>
    <property type="match status" value="1"/>
</dbReference>
<dbReference type="InterPro" id="IPR039766">
    <property type="entry name" value="Vps53"/>
</dbReference>
<dbReference type="InterPro" id="IPR031745">
    <property type="entry name" value="Vps53_C"/>
</dbReference>
<dbReference type="InterPro" id="IPR038260">
    <property type="entry name" value="Vps53_C_sf"/>
</dbReference>
<dbReference type="InterPro" id="IPR007234">
    <property type="entry name" value="Vps53_N"/>
</dbReference>
<dbReference type="PANTHER" id="PTHR12820:SF0">
    <property type="entry name" value="VACUOLAR PROTEIN SORTING-ASSOCIATED PROTEIN 53 HOMOLOG"/>
    <property type="match status" value="1"/>
</dbReference>
<dbReference type="PANTHER" id="PTHR12820">
    <property type="entry name" value="VACUOLAR SORTING PROTEIN 53"/>
    <property type="match status" value="1"/>
</dbReference>
<dbReference type="Pfam" id="PF16854">
    <property type="entry name" value="VPS53_C"/>
    <property type="match status" value="1"/>
</dbReference>
<dbReference type="Pfam" id="PF04100">
    <property type="entry name" value="Vps53_N"/>
    <property type="match status" value="1"/>
</dbReference>
<keyword id="KW-0007">Acetylation</keyword>
<keyword id="KW-0025">Alternative splicing</keyword>
<keyword id="KW-0175">Coiled coil</keyword>
<keyword id="KW-0225">Disease variant</keyword>
<keyword id="KW-0967">Endosome</keyword>
<keyword id="KW-0887">Epilepsy</keyword>
<keyword id="KW-0333">Golgi apparatus</keyword>
<keyword id="KW-0991">Intellectual disability</keyword>
<keyword id="KW-0472">Membrane</keyword>
<keyword id="KW-0523">Neurodegeneration</keyword>
<keyword id="KW-0597">Phosphoprotein</keyword>
<keyword id="KW-0653">Protein transport</keyword>
<keyword id="KW-1267">Proteomics identification</keyword>
<keyword id="KW-1185">Reference proteome</keyword>
<keyword id="KW-0813">Transport</keyword>
<organism>
    <name type="scientific">Homo sapiens</name>
    <name type="common">Human</name>
    <dbReference type="NCBI Taxonomy" id="9606"/>
    <lineage>
        <taxon>Eukaryota</taxon>
        <taxon>Metazoa</taxon>
        <taxon>Chordata</taxon>
        <taxon>Craniata</taxon>
        <taxon>Vertebrata</taxon>
        <taxon>Euteleostomi</taxon>
        <taxon>Mammalia</taxon>
        <taxon>Eutheria</taxon>
        <taxon>Euarchontoglires</taxon>
        <taxon>Primates</taxon>
        <taxon>Haplorrhini</taxon>
        <taxon>Catarrhini</taxon>
        <taxon>Hominidae</taxon>
        <taxon>Homo</taxon>
    </lineage>
</organism>
<name>VPS53_HUMAN</name>
<evidence type="ECO:0000255" key="1"/>
<evidence type="ECO:0000256" key="2">
    <source>
        <dbReference type="SAM" id="MobiDB-lite"/>
    </source>
</evidence>
<evidence type="ECO:0000269" key="3">
    <source>
    </source>
</evidence>
<evidence type="ECO:0000269" key="4">
    <source>
    </source>
</evidence>
<evidence type="ECO:0000269" key="5">
    <source>
    </source>
</evidence>
<evidence type="ECO:0000269" key="6">
    <source>
    </source>
</evidence>
<evidence type="ECO:0000269" key="7">
    <source>
    </source>
</evidence>
<evidence type="ECO:0000269" key="8">
    <source>
    </source>
</evidence>
<evidence type="ECO:0000305" key="9"/>
<evidence type="ECO:0000305" key="10">
    <source>
    </source>
</evidence>
<evidence type="ECO:0000305" key="11">
    <source>
    </source>
</evidence>
<evidence type="ECO:0000305" key="12">
    <source>
    </source>
</evidence>
<evidence type="ECO:0000305" key="13">
    <source>
    </source>
</evidence>
<evidence type="ECO:0007744" key="14">
    <source>
    </source>
</evidence>
<evidence type="ECO:0007744" key="15">
    <source>
    </source>
</evidence>
<evidence type="ECO:0007744" key="16">
    <source>
    </source>
</evidence>
<feature type="chain" id="PRO_0000215189" description="Vacuolar protein sorting-associated protein 53 homolog">
    <location>
        <begin position="1"/>
        <end position="832"/>
    </location>
</feature>
<feature type="region of interest" description="Disordered" evidence="2">
    <location>
        <begin position="373"/>
        <end position="412"/>
    </location>
</feature>
<feature type="region of interest" description="Disordered" evidence="2">
    <location>
        <begin position="794"/>
        <end position="822"/>
    </location>
</feature>
<feature type="coiled-coil region" evidence="1">
    <location>
        <begin position="97"/>
        <end position="138"/>
    </location>
</feature>
<feature type="compositionally biased region" description="Acidic residues" evidence="2">
    <location>
        <begin position="386"/>
        <end position="397"/>
    </location>
</feature>
<feature type="compositionally biased region" description="Basic and acidic residues" evidence="2">
    <location>
        <begin position="398"/>
        <end position="412"/>
    </location>
</feature>
<feature type="compositionally biased region" description="Low complexity" evidence="2">
    <location>
        <begin position="799"/>
        <end position="809"/>
    </location>
</feature>
<feature type="modified residue" description="N6-acetyllysine" evidence="15">
    <location>
        <position position="110"/>
    </location>
</feature>
<feature type="modified residue" description="N6-acetyllysine" evidence="15">
    <location>
        <position position="360"/>
    </location>
</feature>
<feature type="modified residue" description="Phosphoserine" evidence="14">
    <location>
        <position position="377"/>
    </location>
</feature>
<feature type="modified residue" description="Phosphothreonine" evidence="14">
    <location>
        <position position="391"/>
    </location>
</feature>
<feature type="modified residue" description="Phosphoserine" evidence="16">
    <location>
        <position position="580"/>
    </location>
</feature>
<feature type="splice variant" id="VSP_060662" description="In isoform 3." evidence="11 12">
    <location>
        <begin position="96"/>
        <end position="124"/>
    </location>
</feature>
<feature type="splice variant" id="VSP_060787" description="In isoform 4." evidence="10">
    <original>N</original>
    <variation>K</variation>
    <location>
        <position position="672"/>
    </location>
</feature>
<feature type="splice variant" id="VSP_060663" description="In isoform 4." evidence="10">
    <location>
        <begin position="673"/>
        <end position="832"/>
    </location>
</feature>
<feature type="splice variant" id="VSP_060664" description="In isoform 2 and isoform 3." evidence="11 12 13">
    <original>LLLD</original>
    <variation>VRWT</variation>
    <location>
        <begin position="696"/>
        <end position="699"/>
    </location>
</feature>
<feature type="splice variant" id="VSP_060665" description="In isoform 2 and isoform 3." evidence="11 12 13">
    <location>
        <begin position="700"/>
        <end position="832"/>
    </location>
</feature>
<feature type="sequence variant" id="VAR_059959" description="In dbSNP:rs16954056.">
    <original>L</original>
    <variation>I</variation>
    <location>
        <position position="328"/>
    </location>
</feature>
<feature type="sequence variant" id="VAR_066561" description="In dbSNP:rs61644407.">
    <original>L</original>
    <variation>R</variation>
    <location>
        <position position="375"/>
    </location>
</feature>
<feature type="sequence variant" id="VAR_071803" description="In PCH2E; dbSNP:rs587777465." evidence="5">
    <original>Q</original>
    <variation>R</variation>
    <location>
        <position position="695"/>
    </location>
</feature>
<feature type="sequence conflict" description="In Ref. 3; ABW03005." evidence="9" ref="3">
    <original>I</original>
    <variation>V</variation>
    <location>
        <position position="27"/>
    </location>
</feature>
<feature type="sequence conflict" description="In Ref. 3; ABW03005." evidence="9" ref="3">
    <original>K</original>
    <variation>N</variation>
    <location>
        <position position="115"/>
    </location>
</feature>
<feature type="sequence conflict" description="In Ref. 2; AAK27973." evidence="9" ref="2">
    <original>A</original>
    <variation>T</variation>
    <location>
        <position position="466"/>
    </location>
</feature>
<feature type="sequence conflict" description="In Ref. 2; AAK27973." evidence="9" ref="2">
    <original>T</original>
    <variation>P</variation>
    <location>
        <position position="520"/>
    </location>
</feature>
<feature type="sequence conflict" description="In Ref. 2; AAK27973." evidence="9" ref="2">
    <original>G</original>
    <variation>E</variation>
    <location>
        <position position="525"/>
    </location>
</feature>
<feature type="sequence conflict" description="In Ref. 2; AAK27973." evidence="9" ref="2">
    <original>L</original>
    <variation>PV</variation>
    <location>
        <position position="656"/>
    </location>
</feature>
<feature type="sequence conflict" description="In Ref. 2; AAK27973." evidence="9" ref="2">
    <original>F</original>
    <variation>L</variation>
    <location>
        <position position="666"/>
    </location>
</feature>
<gene>
    <name type="primary">VPS53</name>
    <name type="ORF">PP13624</name>
</gene>
<reference key="1">
    <citation type="journal article" date="2005" name="Exp. Cell Res.">
        <title>Characterization of the human GARP (Golgi associated retrograde protein) complex.</title>
        <authorList>
            <person name="Liewen H."/>
            <person name="Meinhold-Heerlein I."/>
            <person name="Oliveira V."/>
            <person name="Schwarzenbacher R."/>
            <person name="Luo G."/>
            <person name="Wadle A."/>
            <person name="Jung M."/>
            <person name="Pfreundschuh M."/>
            <person name="Stenner-Liewen F."/>
        </authorList>
    </citation>
    <scope>NUCLEOTIDE SEQUENCE [MRNA] (ISOFORM 2)</scope>
    <scope>FUNCTION</scope>
    <scope>SUBUNIT</scope>
    <scope>SUBCELLULAR LOCATION</scope>
</reference>
<reference key="2">
    <citation type="journal article" date="2003" name="Cancer Lett.">
        <title>The minimum LOH region defined on chromosome 17p13.3 in human hepatocellular carcinoma with gene content analysis.</title>
        <authorList>
            <person name="Zhao X."/>
            <person name="He M."/>
            <person name="Wan D."/>
            <person name="Ye Y."/>
            <person name="He Y."/>
            <person name="Han L."/>
            <person name="Guo M."/>
            <person name="Huang Y."/>
            <person name="Qin W."/>
            <person name="Wang M.W."/>
            <person name="Chong W."/>
            <person name="Chen J."/>
            <person name="Zhang L."/>
            <person name="Yang N."/>
            <person name="Xu B."/>
            <person name="Wu M."/>
            <person name="Zuo L."/>
            <person name="Gu J."/>
        </authorList>
    </citation>
    <scope>NUCLEOTIDE SEQUENCE [MRNA] (ISOFORM 4)</scope>
</reference>
<reference key="3">
    <citation type="journal article" date="2008" name="Mol. Biol. Cell">
        <title>Requirement of the human GARP complex for mannose 6-phosphate-receptor-dependent sorting of cathepsin D to lysosomes.</title>
        <authorList>
            <person name="Perez-Victoria F.J."/>
            <person name="Mardones G.A."/>
            <person name="Bonifacino J.S."/>
        </authorList>
    </citation>
    <scope>NUCLEOTIDE SEQUENCE [MRNA] (ISOFORM 1)</scope>
    <scope>SUBCELLULAR LOCATION</scope>
    <scope>FUNCTION</scope>
</reference>
<reference key="4">
    <citation type="journal article" date="2004" name="Nat. Genet.">
        <title>Complete sequencing and characterization of 21,243 full-length human cDNAs.</title>
        <authorList>
            <person name="Ota T."/>
            <person name="Suzuki Y."/>
            <person name="Nishikawa T."/>
            <person name="Otsuki T."/>
            <person name="Sugiyama T."/>
            <person name="Irie R."/>
            <person name="Wakamatsu A."/>
            <person name="Hayashi K."/>
            <person name="Sato H."/>
            <person name="Nagai K."/>
            <person name="Kimura K."/>
            <person name="Makita H."/>
            <person name="Sekine M."/>
            <person name="Obayashi M."/>
            <person name="Nishi T."/>
            <person name="Shibahara T."/>
            <person name="Tanaka T."/>
            <person name="Ishii S."/>
            <person name="Yamamoto J."/>
            <person name="Saito K."/>
            <person name="Kawai Y."/>
            <person name="Isono Y."/>
            <person name="Nakamura Y."/>
            <person name="Nagahari K."/>
            <person name="Murakami K."/>
            <person name="Yasuda T."/>
            <person name="Iwayanagi T."/>
            <person name="Wagatsuma M."/>
            <person name="Shiratori A."/>
            <person name="Sudo H."/>
            <person name="Hosoiri T."/>
            <person name="Kaku Y."/>
            <person name="Kodaira H."/>
            <person name="Kondo H."/>
            <person name="Sugawara M."/>
            <person name="Takahashi M."/>
            <person name="Kanda K."/>
            <person name="Yokoi T."/>
            <person name="Furuya T."/>
            <person name="Kikkawa E."/>
            <person name="Omura Y."/>
            <person name="Abe K."/>
            <person name="Kamihara K."/>
            <person name="Katsuta N."/>
            <person name="Sato K."/>
            <person name="Tanikawa M."/>
            <person name="Yamazaki M."/>
            <person name="Ninomiya K."/>
            <person name="Ishibashi T."/>
            <person name="Yamashita H."/>
            <person name="Murakawa K."/>
            <person name="Fujimori K."/>
            <person name="Tanai H."/>
            <person name="Kimata M."/>
            <person name="Watanabe M."/>
            <person name="Hiraoka S."/>
            <person name="Chiba Y."/>
            <person name="Ishida S."/>
            <person name="Ono Y."/>
            <person name="Takiguchi S."/>
            <person name="Watanabe S."/>
            <person name="Yosida M."/>
            <person name="Hotuta T."/>
            <person name="Kusano J."/>
            <person name="Kanehori K."/>
            <person name="Takahashi-Fujii A."/>
            <person name="Hara H."/>
            <person name="Tanase T.-O."/>
            <person name="Nomura Y."/>
            <person name="Togiya S."/>
            <person name="Komai F."/>
            <person name="Hara R."/>
            <person name="Takeuchi K."/>
            <person name="Arita M."/>
            <person name="Imose N."/>
            <person name="Musashino K."/>
            <person name="Yuuki H."/>
            <person name="Oshima A."/>
            <person name="Sasaki N."/>
            <person name="Aotsuka S."/>
            <person name="Yoshikawa Y."/>
            <person name="Matsunawa H."/>
            <person name="Ichihara T."/>
            <person name="Shiohata N."/>
            <person name="Sano S."/>
            <person name="Moriya S."/>
            <person name="Momiyama H."/>
            <person name="Satoh N."/>
            <person name="Takami S."/>
            <person name="Terashima Y."/>
            <person name="Suzuki O."/>
            <person name="Nakagawa S."/>
            <person name="Senoh A."/>
            <person name="Mizoguchi H."/>
            <person name="Goto Y."/>
            <person name="Shimizu F."/>
            <person name="Wakebe H."/>
            <person name="Hishigaki H."/>
            <person name="Watanabe T."/>
            <person name="Sugiyama A."/>
            <person name="Takemoto M."/>
            <person name="Kawakami B."/>
            <person name="Yamazaki M."/>
            <person name="Watanabe K."/>
            <person name="Kumagai A."/>
            <person name="Itakura S."/>
            <person name="Fukuzumi Y."/>
            <person name="Fujimori Y."/>
            <person name="Komiyama M."/>
            <person name="Tashiro H."/>
            <person name="Tanigami A."/>
            <person name="Fujiwara T."/>
            <person name="Ono T."/>
            <person name="Yamada K."/>
            <person name="Fujii Y."/>
            <person name="Ozaki K."/>
            <person name="Hirao M."/>
            <person name="Ohmori Y."/>
            <person name="Kawabata A."/>
            <person name="Hikiji T."/>
            <person name="Kobatake N."/>
            <person name="Inagaki H."/>
            <person name="Ikema Y."/>
            <person name="Okamoto S."/>
            <person name="Okitani R."/>
            <person name="Kawakami T."/>
            <person name="Noguchi S."/>
            <person name="Itoh T."/>
            <person name="Shigeta K."/>
            <person name="Senba T."/>
            <person name="Matsumura K."/>
            <person name="Nakajima Y."/>
            <person name="Mizuno T."/>
            <person name="Morinaga M."/>
            <person name="Sasaki M."/>
            <person name="Togashi T."/>
            <person name="Oyama M."/>
            <person name="Hata H."/>
            <person name="Watanabe M."/>
            <person name="Komatsu T."/>
            <person name="Mizushima-Sugano J."/>
            <person name="Satoh T."/>
            <person name="Shirai Y."/>
            <person name="Takahashi Y."/>
            <person name="Nakagawa K."/>
            <person name="Okumura K."/>
            <person name="Nagase T."/>
            <person name="Nomura N."/>
            <person name="Kikuchi H."/>
            <person name="Masuho Y."/>
            <person name="Yamashita R."/>
            <person name="Nakai K."/>
            <person name="Yada T."/>
            <person name="Nakamura Y."/>
            <person name="Ohara O."/>
            <person name="Isogai T."/>
            <person name="Sugano S."/>
        </authorList>
    </citation>
    <scope>NUCLEOTIDE SEQUENCE [LARGE SCALE MRNA] (ISOFORM 3)</scope>
    <source>
        <tissue>Placenta</tissue>
        <tissue>Tongue</tissue>
    </source>
</reference>
<reference key="5">
    <citation type="journal article" date="2006" name="Nature">
        <title>DNA sequence of human chromosome 17 and analysis of rearrangement in the human lineage.</title>
        <authorList>
            <person name="Zody M.C."/>
            <person name="Garber M."/>
            <person name="Adams D.J."/>
            <person name="Sharpe T."/>
            <person name="Harrow J."/>
            <person name="Lupski J.R."/>
            <person name="Nicholson C."/>
            <person name="Searle S.M."/>
            <person name="Wilming L."/>
            <person name="Young S.K."/>
            <person name="Abouelleil A."/>
            <person name="Allen N.R."/>
            <person name="Bi W."/>
            <person name="Bloom T."/>
            <person name="Borowsky M.L."/>
            <person name="Bugalter B.E."/>
            <person name="Butler J."/>
            <person name="Chang J.L."/>
            <person name="Chen C.-K."/>
            <person name="Cook A."/>
            <person name="Corum B."/>
            <person name="Cuomo C.A."/>
            <person name="de Jong P.J."/>
            <person name="DeCaprio D."/>
            <person name="Dewar K."/>
            <person name="FitzGerald M."/>
            <person name="Gilbert J."/>
            <person name="Gibson R."/>
            <person name="Gnerre S."/>
            <person name="Goldstein S."/>
            <person name="Grafham D.V."/>
            <person name="Grocock R."/>
            <person name="Hafez N."/>
            <person name="Hagopian D.S."/>
            <person name="Hart E."/>
            <person name="Norman C.H."/>
            <person name="Humphray S."/>
            <person name="Jaffe D.B."/>
            <person name="Jones M."/>
            <person name="Kamal M."/>
            <person name="Khodiyar V.K."/>
            <person name="LaButti K."/>
            <person name="Laird G."/>
            <person name="Lehoczky J."/>
            <person name="Liu X."/>
            <person name="Lokyitsang T."/>
            <person name="Loveland J."/>
            <person name="Lui A."/>
            <person name="Macdonald P."/>
            <person name="Major J.E."/>
            <person name="Matthews L."/>
            <person name="Mauceli E."/>
            <person name="McCarroll S.A."/>
            <person name="Mihalev A.H."/>
            <person name="Mudge J."/>
            <person name="Nguyen C."/>
            <person name="Nicol R."/>
            <person name="O'Leary S.B."/>
            <person name="Osoegawa K."/>
            <person name="Schwartz D.C."/>
            <person name="Shaw-Smith C."/>
            <person name="Stankiewicz P."/>
            <person name="Steward C."/>
            <person name="Swarbreck D."/>
            <person name="Venkataraman V."/>
            <person name="Whittaker C.A."/>
            <person name="Yang X."/>
            <person name="Zimmer A.R."/>
            <person name="Bradley A."/>
            <person name="Hubbard T."/>
            <person name="Birren B.W."/>
            <person name="Rogers J."/>
            <person name="Lander E.S."/>
            <person name="Nusbaum C."/>
        </authorList>
    </citation>
    <scope>NUCLEOTIDE SEQUENCE [LARGE SCALE GENOMIC DNA]</scope>
</reference>
<reference key="6">
    <citation type="submission" date="2005-09" db="EMBL/GenBank/DDBJ databases">
        <authorList>
            <person name="Mural R.J."/>
            <person name="Istrail S."/>
            <person name="Sutton G.G."/>
            <person name="Florea L."/>
            <person name="Halpern A.L."/>
            <person name="Mobarry C.M."/>
            <person name="Lippert R."/>
            <person name="Walenz B."/>
            <person name="Shatkay H."/>
            <person name="Dew I."/>
            <person name="Miller J.R."/>
            <person name="Flanigan M.J."/>
            <person name="Edwards N.J."/>
            <person name="Bolanos R."/>
            <person name="Fasulo D."/>
            <person name="Halldorsson B.V."/>
            <person name="Hannenhalli S."/>
            <person name="Turner R."/>
            <person name="Yooseph S."/>
            <person name="Lu F."/>
            <person name="Nusskern D.R."/>
            <person name="Shue B.C."/>
            <person name="Zheng X.H."/>
            <person name="Zhong F."/>
            <person name="Delcher A.L."/>
            <person name="Huson D.H."/>
            <person name="Kravitz S.A."/>
            <person name="Mouchard L."/>
            <person name="Reinert K."/>
            <person name="Remington K.A."/>
            <person name="Clark A.G."/>
            <person name="Waterman M.S."/>
            <person name="Eichler E.E."/>
            <person name="Adams M.D."/>
            <person name="Hunkapiller M.W."/>
            <person name="Myers E.W."/>
            <person name="Venter J.C."/>
        </authorList>
    </citation>
    <scope>NUCLEOTIDE SEQUENCE [LARGE SCALE GENOMIC DNA]</scope>
</reference>
<reference key="7">
    <citation type="journal article" date="2004" name="Genome Res.">
        <title>The status, quality, and expansion of the NIH full-length cDNA project: the Mammalian Gene Collection (MGC).</title>
        <authorList>
            <consortium name="The MGC Project Team"/>
        </authorList>
    </citation>
    <scope>NUCLEOTIDE SEQUENCE [LARGE SCALE MRNA] (ISOFORM 3)</scope>
    <source>
        <tissue>Placenta</tissue>
    </source>
</reference>
<reference key="8">
    <citation type="journal article" date="2004" name="Proc. Natl. Acad. Sci. U.S.A.">
        <title>Large-scale cDNA transfection screening for genes related to cancer development and progression.</title>
        <authorList>
            <person name="Wan D."/>
            <person name="Gong Y."/>
            <person name="Qin W."/>
            <person name="Zhang P."/>
            <person name="Li J."/>
            <person name="Wei L."/>
            <person name="Zhou X."/>
            <person name="Li H."/>
            <person name="Qiu X."/>
            <person name="Zhong F."/>
            <person name="He L."/>
            <person name="Yu J."/>
            <person name="Yao G."/>
            <person name="Jiang H."/>
            <person name="Qian L."/>
            <person name="Yu Y."/>
            <person name="Shu H."/>
            <person name="Chen X."/>
            <person name="Xu H."/>
            <person name="Guo M."/>
            <person name="Pan Z."/>
            <person name="Chen Y."/>
            <person name="Ge C."/>
            <person name="Yang S."/>
            <person name="Gu J."/>
        </authorList>
    </citation>
    <scope>NUCLEOTIDE SEQUENCE [LARGE SCALE MRNA] OF 1-657 (ISOFORM 1)</scope>
</reference>
<reference key="9">
    <citation type="journal article" date="2008" name="Mol. Cell">
        <title>Kinase-selective enrichment enables quantitative phosphoproteomics of the kinome across the cell cycle.</title>
        <authorList>
            <person name="Daub H."/>
            <person name="Olsen J.V."/>
            <person name="Bairlein M."/>
            <person name="Gnad F."/>
            <person name="Oppermann F.S."/>
            <person name="Korner R."/>
            <person name="Greff Z."/>
            <person name="Keri G."/>
            <person name="Stemmann O."/>
            <person name="Mann M."/>
        </authorList>
    </citation>
    <scope>PHOSPHORYLATION [LARGE SCALE ANALYSIS] AT SER-377 AND THR-391</scope>
    <scope>IDENTIFICATION BY MASS SPECTROMETRY [LARGE SCALE ANALYSIS]</scope>
    <source>
        <tissue>Cervix carcinoma</tissue>
    </source>
</reference>
<reference key="10">
    <citation type="journal article" date="2009" name="Science">
        <title>Lysine acetylation targets protein complexes and co-regulates major cellular functions.</title>
        <authorList>
            <person name="Choudhary C."/>
            <person name="Kumar C."/>
            <person name="Gnad F."/>
            <person name="Nielsen M.L."/>
            <person name="Rehman M."/>
            <person name="Walther T.C."/>
            <person name="Olsen J.V."/>
            <person name="Mann M."/>
        </authorList>
    </citation>
    <scope>ACETYLATION [LARGE SCALE ANALYSIS] AT LYS-110 AND LYS-360</scope>
    <scope>IDENTIFICATION BY MASS SPECTROMETRY [LARGE SCALE ANALYSIS]</scope>
</reference>
<reference key="11">
    <citation type="journal article" date="2010" name="Mol. Biol. Cell">
        <title>Ang2/fat-free is a conserved subunit of the Golgi-associated retrograde protein complex.</title>
        <authorList>
            <person name="Perez-Victoria F.J."/>
            <person name="Schindler C."/>
            <person name="Magadan J.G."/>
            <person name="Mardones G.A."/>
            <person name="Delevoye C."/>
            <person name="Romao M."/>
            <person name="Raposo G."/>
            <person name="Bonifacino J.S."/>
        </authorList>
    </citation>
    <scope>INTERACTION WITH VPS51</scope>
</reference>
<reference key="12">
    <citation type="journal article" date="2010" name="Sci. Signal.">
        <title>Quantitative phosphoproteomics reveals widespread full phosphorylation site occupancy during mitosis.</title>
        <authorList>
            <person name="Olsen J.V."/>
            <person name="Vermeulen M."/>
            <person name="Santamaria A."/>
            <person name="Kumar C."/>
            <person name="Miller M.L."/>
            <person name="Jensen L.J."/>
            <person name="Gnad F."/>
            <person name="Cox J."/>
            <person name="Jensen T.S."/>
            <person name="Nigg E.A."/>
            <person name="Brunak S."/>
            <person name="Mann M."/>
        </authorList>
    </citation>
    <scope>PHOSPHORYLATION [LARGE SCALE ANALYSIS] AT SER-580</scope>
    <scope>IDENTIFICATION BY MASS SPECTROMETRY [LARGE SCALE ANALYSIS]</scope>
    <source>
        <tissue>Cervix carcinoma</tissue>
    </source>
</reference>
<reference key="13">
    <citation type="journal article" date="2011" name="BMC Syst. Biol.">
        <title>Initial characterization of the human central proteome.</title>
        <authorList>
            <person name="Burkard T.R."/>
            <person name="Planyavsky M."/>
            <person name="Kaupe I."/>
            <person name="Breitwieser F.P."/>
            <person name="Buerckstuemmer T."/>
            <person name="Bennett K.L."/>
            <person name="Superti-Furga G."/>
            <person name="Colinge J."/>
        </authorList>
    </citation>
    <scope>IDENTIFICATION BY MASS SPECTROMETRY [LARGE SCALE ANALYSIS]</scope>
</reference>
<reference key="14">
    <citation type="journal article" date="2014" name="J. Med. Genet.">
        <title>VPS53 mutations cause progressive cerebello-cerebral atrophy type 2 (PCCA2).</title>
        <authorList>
            <person name="Feinstein M."/>
            <person name="Flusser H."/>
            <person name="Lerman-Sagie T."/>
            <person name="Ben-Zeev B."/>
            <person name="Lev D."/>
            <person name="Agamy O."/>
            <person name="Cohen I."/>
            <person name="Kadir R."/>
            <person name="Sivan S."/>
            <person name="Leshinsky-Silver E."/>
            <person name="Markus B."/>
            <person name="Birk O.S."/>
        </authorList>
    </citation>
    <scope>INVOLVEMENT IN PCH2E</scope>
    <scope>VARIANT PCH2E ARG-695</scope>
</reference>
<reference key="15">
    <citation type="journal article" date="2014" name="J. Proteomics">
        <title>An enzyme assisted RP-RPLC approach for in-depth analysis of human liver phosphoproteome.</title>
        <authorList>
            <person name="Bian Y."/>
            <person name="Song C."/>
            <person name="Cheng K."/>
            <person name="Dong M."/>
            <person name="Wang F."/>
            <person name="Huang J."/>
            <person name="Sun D."/>
            <person name="Wang L."/>
            <person name="Ye M."/>
            <person name="Zou H."/>
        </authorList>
    </citation>
    <scope>IDENTIFICATION BY MASS SPECTROMETRY [LARGE SCALE ANALYSIS]</scope>
    <source>
        <tissue>Liver</tissue>
    </source>
</reference>
<reference key="16">
    <citation type="journal article" date="2015" name="Nat. Cell Biol.">
        <title>EARP is a multisubunit tethering complex involved in endocytic recycling.</title>
        <authorList>
            <person name="Schindler C."/>
            <person name="Chen Y."/>
            <person name="Pu J."/>
            <person name="Guo X."/>
            <person name="Bonifacino J.S."/>
        </authorList>
    </citation>
    <scope>FUNCTION</scope>
    <scope>SUBCELLULAR LOCATION</scope>
    <scope>IDENTIFICATION IN THE EARP COMPLEX</scope>
</reference>
<reference key="17">
    <citation type="journal article" date="2016" name="Mol. Biol. Cell">
        <title>TSSC1 is novel component of the endosomal retrieval machinery.</title>
        <authorList>
            <person name="Gershlick D.C."/>
            <person name="Schindler C."/>
            <person name="Chen Y."/>
            <person name="Bonifacino J.S."/>
        </authorList>
    </citation>
    <scope>INTERACTION WITH EIPR1</scope>
    <scope>IDENTIFICATION IN THE EARP COMPLEX</scope>
    <scope>IDENTIFICATION IN THE GARP COMPLEX</scope>
</reference>
<reference key="18">
    <citation type="journal article" date="2020" name="Mol. Biol. Cell">
        <title>EIPR1 controls dense-core vesicle cargo retention and EARP complex localization in insulin-secreting cells.</title>
        <authorList>
            <person name="Topalidou I."/>
            <person name="Cattin-Ortola J."/>
            <person name="Hummer B."/>
            <person name="Asensio C.S."/>
            <person name="Ailion M."/>
        </authorList>
    </citation>
    <scope>INTERACTION WITH VPS50</scope>
</reference>
<comment type="function">
    <text evidence="3 4 6">Acts as a component of the GARP complex that is involved in retrograde transport from early and late endosomes to the trans-Golgi network (TGN). The GARP complex is required for the maintenance of the cycling of mannose 6-phosphate receptors between the TGN and endosomes, this cycling is necessary for proper lysosomal sorting of acid hydrolases such as CTSD (PubMed:15878329, PubMed:18367545). Acts as a component of the EARP complex that is involved in endocytic recycling. The EARP complex associates with Rab4-positive endosomes and promotes recycling of internalized transferrin receptor (TFRC) to the plasma membrane (PubMed:25799061).</text>
</comment>
<comment type="subunit">
    <text evidence="3 6 7 8">Component of the Golgi-associated retrograde protein (GARP) complex, also called VFT (VPS fifty-three) complex, composed of VPS51, VPS52, VPS53 and VPS54 (PubMed:15878329, PubMed:27440922). Component of the endosome-associated retrograde protein (EARP) complex, composed of VPS51, VPS52, VPS53 and VPS50/Syndetin (PubMed:25799061, PubMed:27440922). EIPR1 interacts with both EARP and GARP complexes and mediates the recruitment of the GARP complex to the trans-Golgi network (PubMed:27440922). Interacts with VPS50 in an EIPR1-independent manner (PubMed:31721635).</text>
</comment>
<comment type="interaction">
    <interactant intactId="EBI-2850511">
        <id>Q5VIR6</id>
    </interactant>
    <interactant intactId="EBI-11044388">
        <id>Q96JG6</id>
        <label>VPS50</label>
    </interactant>
    <organismsDiffer>false</organismsDiffer>
    <experiments>10</experiments>
</comment>
<comment type="interaction">
    <interactant intactId="EBI-2850511">
        <id>Q5VIR6</id>
    </interactant>
    <interactant intactId="EBI-5235744">
        <id>Q9P1Q0</id>
        <label>VPS54</label>
    </interactant>
    <organismsDiffer>false</organismsDiffer>
    <experiments>4</experiments>
</comment>
<comment type="subcellular location">
    <subcellularLocation>
        <location evidence="3 4">Golgi apparatus</location>
        <location evidence="3 4">trans-Golgi network membrane</location>
        <topology>Peripheral membrane protein</topology>
    </subcellularLocation>
    <subcellularLocation>
        <location evidence="4">Endosome membrane</location>
        <topology>Peripheral membrane protein</topology>
    </subcellularLocation>
    <subcellularLocation>
        <location evidence="6">Recycling endosome</location>
    </subcellularLocation>
    <text evidence="6">Localizes to the trans-Golgi network as part of the GARP complex, while it localizes to recycling endosomes as part of the EARP complex (PubMed:25799061).</text>
</comment>
<comment type="alternative products">
    <event type="alternative splicing"/>
    <isoform>
        <id>Q5VIR6-4</id>
        <name>1</name>
        <sequence type="displayed"/>
    </isoform>
    <isoform>
        <id>Q5VIR6-1</id>
        <name>2</name>
        <name>long</name>
        <sequence type="described" ref="VSP_060664 VSP_060665"/>
    </isoform>
    <isoform>
        <id>Q5VIR6-2</id>
        <name>3</name>
        <name>short</name>
        <sequence type="described" ref="VSP_060662 VSP_060664 VSP_060665"/>
    </isoform>
    <isoform>
        <id>Q5VIR6-3</id>
        <name>4</name>
        <sequence type="described" ref="VSP_060787 VSP_060663"/>
    </isoform>
</comment>
<comment type="disease" evidence="5">
    <disease id="DI-04128">
        <name>Pontocerebellar hypoplasia 2E</name>
        <acronym>PCH2E</acronym>
        <description>An autosomal recessive neurodegenerative disorder characterized by progressive cerebello-cerebral atrophy, profound intellectual disability, progressive microcephaly, spasticity, and early-onset epilepsy.</description>
        <dbReference type="MIM" id="615851"/>
    </disease>
    <text>The disease is caused by variants affecting the gene represented in this entry.</text>
</comment>
<comment type="similarity">
    <text evidence="9">Belongs to the VPS53 family.</text>
</comment>
<comment type="sequence caution" evidence="9">
    <conflict type="miscellaneous discrepancy">
        <sequence resource="EMBL-CDS" id="AAL55842"/>
    </conflict>
    <text>Probable cloning artifact.</text>
</comment>
<comment type="sequence caution" evidence="9">
    <conflict type="erroneous initiation">
        <sequence resource="EMBL-CDS" id="BAA91935"/>
    </conflict>
    <text>Truncated N-terminus.</text>
</comment>
<accession>Q5VIR6</accession>
<accession>A8K2S8</accession>
<accession>B3FH42</accession>
<accession>Q8WYW3</accession>
<accession>Q9BRR2</accession>
<accession>Q9BY02</accession>
<accession>Q9NV25</accession>